<protein>
    <recommendedName>
        <fullName evidence="5">Rho-related GTP-binding protein RhoA-C</fullName>
    </recommendedName>
</protein>
<accession>Q7T2E8</accession>
<accession>F1R5L0</accession>
<proteinExistence type="evidence at protein level"/>
<gene>
    <name evidence="4 8" type="primary">rhoac</name>
</gene>
<reference key="1">
    <citation type="journal article" date="2013" name="Nature">
        <title>The zebrafish reference genome sequence and its relationship to the human genome.</title>
        <authorList>
            <person name="Howe K."/>
            <person name="Clark M.D."/>
            <person name="Torroja C.F."/>
            <person name="Torrance J."/>
            <person name="Berthelot C."/>
            <person name="Muffato M."/>
            <person name="Collins J.E."/>
            <person name="Humphray S."/>
            <person name="McLaren K."/>
            <person name="Matthews L."/>
            <person name="McLaren S."/>
            <person name="Sealy I."/>
            <person name="Caccamo M."/>
            <person name="Churcher C."/>
            <person name="Scott C."/>
            <person name="Barrett J.C."/>
            <person name="Koch R."/>
            <person name="Rauch G.J."/>
            <person name="White S."/>
            <person name="Chow W."/>
            <person name="Kilian B."/>
            <person name="Quintais L.T."/>
            <person name="Guerra-Assuncao J.A."/>
            <person name="Zhou Y."/>
            <person name="Gu Y."/>
            <person name="Yen J."/>
            <person name="Vogel J.H."/>
            <person name="Eyre T."/>
            <person name="Redmond S."/>
            <person name="Banerjee R."/>
            <person name="Chi J."/>
            <person name="Fu B."/>
            <person name="Langley E."/>
            <person name="Maguire S.F."/>
            <person name="Laird G.K."/>
            <person name="Lloyd D."/>
            <person name="Kenyon E."/>
            <person name="Donaldson S."/>
            <person name="Sehra H."/>
            <person name="Almeida-King J."/>
            <person name="Loveland J."/>
            <person name="Trevanion S."/>
            <person name="Jones M."/>
            <person name="Quail M."/>
            <person name="Willey D."/>
            <person name="Hunt A."/>
            <person name="Burton J."/>
            <person name="Sims S."/>
            <person name="McLay K."/>
            <person name="Plumb B."/>
            <person name="Davis J."/>
            <person name="Clee C."/>
            <person name="Oliver K."/>
            <person name="Clark R."/>
            <person name="Riddle C."/>
            <person name="Elliot D."/>
            <person name="Threadgold G."/>
            <person name="Harden G."/>
            <person name="Ware D."/>
            <person name="Begum S."/>
            <person name="Mortimore B."/>
            <person name="Kerry G."/>
            <person name="Heath P."/>
            <person name="Phillimore B."/>
            <person name="Tracey A."/>
            <person name="Corby N."/>
            <person name="Dunn M."/>
            <person name="Johnson C."/>
            <person name="Wood J."/>
            <person name="Clark S."/>
            <person name="Pelan S."/>
            <person name="Griffiths G."/>
            <person name="Smith M."/>
            <person name="Glithero R."/>
            <person name="Howden P."/>
            <person name="Barker N."/>
            <person name="Lloyd C."/>
            <person name="Stevens C."/>
            <person name="Harley J."/>
            <person name="Holt K."/>
            <person name="Panagiotidis G."/>
            <person name="Lovell J."/>
            <person name="Beasley H."/>
            <person name="Henderson C."/>
            <person name="Gordon D."/>
            <person name="Auger K."/>
            <person name="Wright D."/>
            <person name="Collins J."/>
            <person name="Raisen C."/>
            <person name="Dyer L."/>
            <person name="Leung K."/>
            <person name="Robertson L."/>
            <person name="Ambridge K."/>
            <person name="Leongamornlert D."/>
            <person name="McGuire S."/>
            <person name="Gilderthorp R."/>
            <person name="Griffiths C."/>
            <person name="Manthravadi D."/>
            <person name="Nichol S."/>
            <person name="Barker G."/>
            <person name="Whitehead S."/>
            <person name="Kay M."/>
            <person name="Brown J."/>
            <person name="Murnane C."/>
            <person name="Gray E."/>
            <person name="Humphries M."/>
            <person name="Sycamore N."/>
            <person name="Barker D."/>
            <person name="Saunders D."/>
            <person name="Wallis J."/>
            <person name="Babbage A."/>
            <person name="Hammond S."/>
            <person name="Mashreghi-Mohammadi M."/>
            <person name="Barr L."/>
            <person name="Martin S."/>
            <person name="Wray P."/>
            <person name="Ellington A."/>
            <person name="Matthews N."/>
            <person name="Ellwood M."/>
            <person name="Woodmansey R."/>
            <person name="Clark G."/>
            <person name="Cooper J."/>
            <person name="Tromans A."/>
            <person name="Grafham D."/>
            <person name="Skuce C."/>
            <person name="Pandian R."/>
            <person name="Andrews R."/>
            <person name="Harrison E."/>
            <person name="Kimberley A."/>
            <person name="Garnett J."/>
            <person name="Fosker N."/>
            <person name="Hall R."/>
            <person name="Garner P."/>
            <person name="Kelly D."/>
            <person name="Bird C."/>
            <person name="Palmer S."/>
            <person name="Gehring I."/>
            <person name="Berger A."/>
            <person name="Dooley C.M."/>
            <person name="Ersan-Urun Z."/>
            <person name="Eser C."/>
            <person name="Geiger H."/>
            <person name="Geisler M."/>
            <person name="Karotki L."/>
            <person name="Kirn A."/>
            <person name="Konantz J."/>
            <person name="Konantz M."/>
            <person name="Oberlander M."/>
            <person name="Rudolph-Geiger S."/>
            <person name="Teucke M."/>
            <person name="Lanz C."/>
            <person name="Raddatz G."/>
            <person name="Osoegawa K."/>
            <person name="Zhu B."/>
            <person name="Rapp A."/>
            <person name="Widaa S."/>
            <person name="Langford C."/>
            <person name="Yang F."/>
            <person name="Schuster S.C."/>
            <person name="Carter N.P."/>
            <person name="Harrow J."/>
            <person name="Ning Z."/>
            <person name="Herrero J."/>
            <person name="Searle S.M."/>
            <person name="Enright A."/>
            <person name="Geisler R."/>
            <person name="Plasterk R.H."/>
            <person name="Lee C."/>
            <person name="Westerfield M."/>
            <person name="de Jong P.J."/>
            <person name="Zon L.I."/>
            <person name="Postlethwait J.H."/>
            <person name="Nusslein-Volhard C."/>
            <person name="Hubbard T.J."/>
            <person name="Roest Crollius H."/>
            <person name="Rogers J."/>
            <person name="Stemple D.L."/>
        </authorList>
    </citation>
    <scope>NUCLEOTIDE SEQUENCE [LARGE SCALE GENOMIC DNA]</scope>
    <source>
        <strain>Tuebingen</strain>
    </source>
</reference>
<reference key="2">
    <citation type="submission" date="2003-07" db="EMBL/GenBank/DDBJ databases">
        <authorList>
            <consortium name="NIH - Zebrafish Gene Collection (ZGC) project"/>
        </authorList>
    </citation>
    <scope>NUCLEOTIDE SEQUENCE [LARGE SCALE MRNA]</scope>
    <source>
        <tissue evidence="7">Kidney</tissue>
    </source>
</reference>
<reference key="3">
    <citation type="journal article" date="2005" name="Genomics">
        <title>Genomic annotation and expression analysis of the zebrafish Rho small GTPase family during development and bacterial infection.</title>
        <authorList>
            <person name="Salas-Vidal E."/>
            <person name="Meijer A.H."/>
            <person name="Cheng X."/>
            <person name="Spaink H.P."/>
        </authorList>
    </citation>
    <scope>NOMENCLATURE</scope>
</reference>
<reference key="4">
    <citation type="journal article" date="2015" name="Nat. Commun.">
        <title>Tyrosine glycosylation of Rho by Yersinia toxin impairs blastomere cell behaviour in zebrafish embryos.</title>
        <authorList>
            <person name="Jank T."/>
            <person name="Eckerle S."/>
            <person name="Steinemann M."/>
            <person name="Trillhaase C."/>
            <person name="Schimpl M."/>
            <person name="Wiese S."/>
            <person name="van Aalten D.M."/>
            <person name="Driever W."/>
            <person name="Aktories K."/>
        </authorList>
    </citation>
    <scope>GLYCOSYLATION AT TYR-34 (MICROBIAL INFECTION)</scope>
    <scope>SUBCELLULAR LOCATION</scope>
</reference>
<sequence length="193" mass="21851">MAAIRKKLVIVGDGACGKTCLLIVFSKDQFPEVYVPTVFENYVADIEVDSKQVELALWDTAGQEDYDRLRPLSYPDTDVILMCFSIDSPDSLENIPEKWTPEVKHFCPNVPIILVGNKKDLRNDEHTRRELAKMKQEPVKPEEGRDMANRINAFGYLECSAKTKDGVREVFEMATRAALQARKRGKKSGCLLL</sequence>
<evidence type="ECO:0000250" key="1">
    <source>
        <dbReference type="UniProtKB" id="P61585"/>
    </source>
</evidence>
<evidence type="ECO:0000250" key="2">
    <source>
        <dbReference type="UniProtKB" id="P61586"/>
    </source>
</evidence>
<evidence type="ECO:0000250" key="3">
    <source>
        <dbReference type="UniProtKB" id="P62820"/>
    </source>
</evidence>
<evidence type="ECO:0000303" key="4">
    <source>
    </source>
</evidence>
<evidence type="ECO:0000305" key="5"/>
<evidence type="ECO:0000305" key="6">
    <source>
    </source>
</evidence>
<evidence type="ECO:0000312" key="7">
    <source>
        <dbReference type="EMBL" id="AAH54576.1"/>
    </source>
</evidence>
<evidence type="ECO:0000312" key="8">
    <source>
        <dbReference type="ZFIN" id="ZDB-GENE-040426-2665"/>
    </source>
</evidence>
<comment type="function">
    <text evidence="2">Regulates a signal transduction pathway linking plasma membrane receptors to the assembly of focal adhesions and actin stress fibers.</text>
</comment>
<comment type="subcellular location">
    <subcellularLocation>
        <location evidence="6">Cell membrane</location>
        <topology evidence="2">Lipid-anchor</topology>
        <orientation evidence="2">Cytoplasmic side</orientation>
    </subcellularLocation>
</comment>
<comment type="PTM">
    <text evidence="6">(Microbial infection) Glycosylated at Tyr-34 by Yersinia ruckeri toxin Afp18. Mono-O-GlcNAcylation by Afp18 inhibits RhoA activation by guanine nucleotide exchange factors and blocks RhoA signaling.</text>
</comment>
<comment type="similarity">
    <text evidence="5">Belongs to the small GTPase superfamily. Rho family.</text>
</comment>
<feature type="chain" id="PRO_0000434739" description="Rho-related GTP-binding protein RhoA-C">
    <location>
        <begin position="1"/>
        <end position="190"/>
    </location>
</feature>
<feature type="propeptide" id="PRO_0000434740" description="Removed in mature form" evidence="1">
    <location>
        <begin position="191"/>
        <end position="193"/>
    </location>
</feature>
<feature type="binding site" evidence="2">
    <location>
        <begin position="12"/>
        <end position="19"/>
    </location>
    <ligand>
        <name>GTP</name>
        <dbReference type="ChEBI" id="CHEBI:37565"/>
    </ligand>
</feature>
<feature type="binding site" evidence="3">
    <location>
        <begin position="30"/>
        <end position="37"/>
    </location>
    <ligand>
        <name>GTP</name>
        <dbReference type="ChEBI" id="CHEBI:37565"/>
    </ligand>
</feature>
<feature type="binding site" evidence="3">
    <location>
        <begin position="59"/>
        <end position="63"/>
    </location>
    <ligand>
        <name>GTP</name>
        <dbReference type="ChEBI" id="CHEBI:37565"/>
    </ligand>
</feature>
<feature type="binding site" evidence="2">
    <location>
        <begin position="117"/>
        <end position="120"/>
    </location>
    <ligand>
        <name>GTP</name>
        <dbReference type="ChEBI" id="CHEBI:37565"/>
    </ligand>
</feature>
<feature type="binding site" evidence="3">
    <location>
        <begin position="160"/>
        <end position="162"/>
    </location>
    <ligand>
        <name>GTP</name>
        <dbReference type="ChEBI" id="CHEBI:37565"/>
    </ligand>
</feature>
<feature type="modified residue" description="Cysteine methyl ester" evidence="1">
    <location>
        <position position="190"/>
    </location>
</feature>
<feature type="lipid moiety-binding region" description="S-geranylgeranyl cysteine" evidence="1">
    <location>
        <position position="190"/>
    </location>
</feature>
<feature type="glycosylation site" description="(Microbial infection) O-linked (GlcNAc) tyrosine; by Yersinia Afp18" evidence="6">
    <location>
        <position position="34"/>
    </location>
</feature>
<keyword id="KW-1003">Cell membrane</keyword>
<keyword id="KW-0325">Glycoprotein</keyword>
<keyword id="KW-0342">GTP-binding</keyword>
<keyword id="KW-0449">Lipoprotein</keyword>
<keyword id="KW-0472">Membrane</keyword>
<keyword id="KW-0488">Methylation</keyword>
<keyword id="KW-0547">Nucleotide-binding</keyword>
<keyword id="KW-0636">Prenylation</keyword>
<keyword id="KW-1185">Reference proteome</keyword>
<dbReference type="EMBL" id="CABZ01063935">
    <property type="status" value="NOT_ANNOTATED_CDS"/>
    <property type="molecule type" value="Genomic_DNA"/>
</dbReference>
<dbReference type="EMBL" id="CABZ01063936">
    <property type="status" value="NOT_ANNOTATED_CDS"/>
    <property type="molecule type" value="Genomic_DNA"/>
</dbReference>
<dbReference type="EMBL" id="BC054576">
    <property type="protein sequence ID" value="AAH54576.1"/>
    <property type="molecule type" value="mRNA"/>
</dbReference>
<dbReference type="RefSeq" id="NP_998515.1">
    <property type="nucleotide sequence ID" value="NM_213350.1"/>
</dbReference>
<dbReference type="SMR" id="Q7T2E8"/>
<dbReference type="FunCoup" id="Q7T2E8">
    <property type="interactions" value="3192"/>
</dbReference>
<dbReference type="STRING" id="7955.ENSDARP00000151463"/>
<dbReference type="GlyCosmos" id="Q7T2E8">
    <property type="glycosylation" value="1 site, No reported glycans"/>
</dbReference>
<dbReference type="PaxDb" id="7955-ENSDARP00000072903"/>
<dbReference type="Ensembl" id="ENSDART00000192851">
    <property type="protein sequence ID" value="ENSDARP00000151463"/>
    <property type="gene ID" value="ENSDARG00000116058"/>
</dbReference>
<dbReference type="GeneID" id="406659"/>
<dbReference type="KEGG" id="dre:406659"/>
<dbReference type="AGR" id="ZFIN:ZDB-GENE-040426-2665"/>
<dbReference type="CTD" id="406659"/>
<dbReference type="ZFIN" id="ZDB-GENE-040426-2665">
    <property type="gene designation" value="rhoac"/>
</dbReference>
<dbReference type="eggNOG" id="KOG0393">
    <property type="taxonomic scope" value="Eukaryota"/>
</dbReference>
<dbReference type="InParanoid" id="Q7T2E8"/>
<dbReference type="OMA" id="YEKWIQE"/>
<dbReference type="OrthoDB" id="8830751at2759"/>
<dbReference type="PhylomeDB" id="Q7T2E8"/>
<dbReference type="TreeFam" id="TF300837"/>
<dbReference type="Reactome" id="R-DRE-193634">
    <property type="pathway name" value="Axonal growth inhibition (RHOA activation)"/>
</dbReference>
<dbReference type="Reactome" id="R-DRE-198203">
    <property type="pathway name" value="PI3K/AKT activation"/>
</dbReference>
<dbReference type="Reactome" id="R-DRE-209563">
    <property type="pathway name" value="Axonal growth stimulation"/>
</dbReference>
<dbReference type="Reactome" id="R-DRE-2173791">
    <property type="pathway name" value="TGF-beta receptor signaling in EMT (epithelial to mesenchymal transition)"/>
</dbReference>
<dbReference type="Reactome" id="R-DRE-392451">
    <property type="pathway name" value="G beta:gamma signalling through PI3Kgamma"/>
</dbReference>
<dbReference type="Reactome" id="R-DRE-3928662">
    <property type="pathway name" value="EPHB-mediated forward signaling"/>
</dbReference>
<dbReference type="Reactome" id="R-DRE-3928663">
    <property type="pathway name" value="EPHA-mediated growth cone collapse"/>
</dbReference>
<dbReference type="Reactome" id="R-DRE-4086400">
    <property type="pathway name" value="PCP/CE pathway"/>
</dbReference>
<dbReference type="Reactome" id="R-DRE-416482">
    <property type="pathway name" value="G alpha (12/13) signalling events"/>
</dbReference>
<dbReference type="Reactome" id="R-DRE-416550">
    <property type="pathway name" value="Sema4D mediated inhibition of cell attachment and migration"/>
</dbReference>
<dbReference type="Reactome" id="R-DRE-416572">
    <property type="pathway name" value="Sema4D induced cell migration and growth-cone collapse"/>
</dbReference>
<dbReference type="Reactome" id="R-DRE-4420097">
    <property type="pathway name" value="VEGFA-VEGFR2 Pathway"/>
</dbReference>
<dbReference type="Reactome" id="R-DRE-5625740">
    <property type="pathway name" value="RHO GTPases activate PKNs"/>
</dbReference>
<dbReference type="Reactome" id="R-DRE-5627117">
    <property type="pathway name" value="RHO GTPases Activate ROCKs"/>
</dbReference>
<dbReference type="Reactome" id="R-DRE-5663220">
    <property type="pathway name" value="RHO GTPases Activate Formins"/>
</dbReference>
<dbReference type="Reactome" id="R-DRE-5666185">
    <property type="pathway name" value="RHO GTPases Activate Rhotekin and Rhophilins"/>
</dbReference>
<dbReference type="Reactome" id="R-DRE-5689896">
    <property type="pathway name" value="Ovarian tumor domain proteases"/>
</dbReference>
<dbReference type="Reactome" id="R-DRE-6798695">
    <property type="pathway name" value="Neutrophil degranulation"/>
</dbReference>
<dbReference type="Reactome" id="R-DRE-8849471">
    <property type="pathway name" value="PTK6 Regulates RHO GTPases, RAS GTPase and MAP kinases"/>
</dbReference>
<dbReference type="Reactome" id="R-DRE-8980692">
    <property type="pathway name" value="RHOA GTPase cycle"/>
</dbReference>
<dbReference type="PRO" id="PR:Q7T2E8"/>
<dbReference type="Proteomes" id="UP000000437">
    <property type="component" value="Chromosome 23"/>
</dbReference>
<dbReference type="Bgee" id="ENSDARG00000116058">
    <property type="expression patterns" value="Expressed in mature ovarian follicle and 27 other cell types or tissues"/>
</dbReference>
<dbReference type="GO" id="GO:0032154">
    <property type="term" value="C:cleavage furrow"/>
    <property type="evidence" value="ECO:0000318"/>
    <property type="project" value="GO_Central"/>
</dbReference>
<dbReference type="GO" id="GO:0005829">
    <property type="term" value="C:cytosol"/>
    <property type="evidence" value="ECO:0000318"/>
    <property type="project" value="GO_Central"/>
</dbReference>
<dbReference type="GO" id="GO:0043197">
    <property type="term" value="C:dendritic spine"/>
    <property type="evidence" value="ECO:0000318"/>
    <property type="project" value="GO_Central"/>
</dbReference>
<dbReference type="GO" id="GO:0005886">
    <property type="term" value="C:plasma membrane"/>
    <property type="evidence" value="ECO:0000318"/>
    <property type="project" value="GO_Central"/>
</dbReference>
<dbReference type="GO" id="GO:0005525">
    <property type="term" value="F:GTP binding"/>
    <property type="evidence" value="ECO:0000318"/>
    <property type="project" value="GO_Central"/>
</dbReference>
<dbReference type="GO" id="GO:0003924">
    <property type="term" value="F:GTPase activity"/>
    <property type="evidence" value="ECO:0000318"/>
    <property type="project" value="GO_Central"/>
</dbReference>
<dbReference type="GO" id="GO:0019901">
    <property type="term" value="F:protein kinase binding"/>
    <property type="evidence" value="ECO:0000318"/>
    <property type="project" value="GO_Central"/>
</dbReference>
<dbReference type="GO" id="GO:0016477">
    <property type="term" value="P:cell migration"/>
    <property type="evidence" value="ECO:0000318"/>
    <property type="project" value="GO_Central"/>
</dbReference>
<dbReference type="GO" id="GO:0032956">
    <property type="term" value="P:regulation of actin cytoskeleton organization"/>
    <property type="evidence" value="ECO:0000318"/>
    <property type="project" value="GO_Central"/>
</dbReference>
<dbReference type="GO" id="GO:0007266">
    <property type="term" value="P:Rho protein signal transduction"/>
    <property type="evidence" value="ECO:0000318"/>
    <property type="project" value="GO_Central"/>
</dbReference>
<dbReference type="GO" id="GO:1902766">
    <property type="term" value="P:skeletal muscle satellite cell migration"/>
    <property type="evidence" value="ECO:0000250"/>
    <property type="project" value="AgBase"/>
</dbReference>
<dbReference type="GO" id="GO:0043149">
    <property type="term" value="P:stress fiber assembly"/>
    <property type="evidence" value="ECO:0000318"/>
    <property type="project" value="GO_Central"/>
</dbReference>
<dbReference type="GO" id="GO:0044319">
    <property type="term" value="P:wound healing, spreading of cells"/>
    <property type="evidence" value="ECO:0000250"/>
    <property type="project" value="AgBase"/>
</dbReference>
<dbReference type="CDD" id="cd01870">
    <property type="entry name" value="RhoA_like"/>
    <property type="match status" value="1"/>
</dbReference>
<dbReference type="FunFam" id="3.40.50.300:FF:000095">
    <property type="entry name" value="Rho-related GTP-binding protein RhoC"/>
    <property type="match status" value="1"/>
</dbReference>
<dbReference type="Gene3D" id="3.40.50.300">
    <property type="entry name" value="P-loop containing nucleotide triphosphate hydrolases"/>
    <property type="match status" value="1"/>
</dbReference>
<dbReference type="InterPro" id="IPR027417">
    <property type="entry name" value="P-loop_NTPase"/>
</dbReference>
<dbReference type="InterPro" id="IPR005225">
    <property type="entry name" value="Small_GTP-bd"/>
</dbReference>
<dbReference type="InterPro" id="IPR001806">
    <property type="entry name" value="Small_GTPase"/>
</dbReference>
<dbReference type="InterPro" id="IPR003578">
    <property type="entry name" value="Small_GTPase_Rho"/>
</dbReference>
<dbReference type="NCBIfam" id="TIGR00231">
    <property type="entry name" value="small_GTP"/>
    <property type="match status" value="1"/>
</dbReference>
<dbReference type="PANTHER" id="PTHR24072">
    <property type="entry name" value="RHO FAMILY GTPASE"/>
    <property type="match status" value="1"/>
</dbReference>
<dbReference type="Pfam" id="PF00071">
    <property type="entry name" value="Ras"/>
    <property type="match status" value="1"/>
</dbReference>
<dbReference type="PRINTS" id="PR00449">
    <property type="entry name" value="RASTRNSFRMNG"/>
</dbReference>
<dbReference type="SMART" id="SM00175">
    <property type="entry name" value="RAB"/>
    <property type="match status" value="1"/>
</dbReference>
<dbReference type="SMART" id="SM00173">
    <property type="entry name" value="RAS"/>
    <property type="match status" value="1"/>
</dbReference>
<dbReference type="SMART" id="SM00174">
    <property type="entry name" value="RHO"/>
    <property type="match status" value="1"/>
</dbReference>
<dbReference type="SUPFAM" id="SSF52540">
    <property type="entry name" value="P-loop containing nucleoside triphosphate hydrolases"/>
    <property type="match status" value="1"/>
</dbReference>
<dbReference type="PROSITE" id="PS51420">
    <property type="entry name" value="RHO"/>
    <property type="match status" value="1"/>
</dbReference>
<name>RHOAC_DANRE</name>
<organism evidence="7">
    <name type="scientific">Danio rerio</name>
    <name type="common">Zebrafish</name>
    <name type="synonym">Brachydanio rerio</name>
    <dbReference type="NCBI Taxonomy" id="7955"/>
    <lineage>
        <taxon>Eukaryota</taxon>
        <taxon>Metazoa</taxon>
        <taxon>Chordata</taxon>
        <taxon>Craniata</taxon>
        <taxon>Vertebrata</taxon>
        <taxon>Euteleostomi</taxon>
        <taxon>Actinopterygii</taxon>
        <taxon>Neopterygii</taxon>
        <taxon>Teleostei</taxon>
        <taxon>Ostariophysi</taxon>
        <taxon>Cypriniformes</taxon>
        <taxon>Danionidae</taxon>
        <taxon>Danioninae</taxon>
        <taxon>Danio</taxon>
    </lineage>
</organism>